<feature type="chain" id="PRO_0000286963" description="Uncharacterized membrane protein SH2145">
    <location>
        <begin position="1"/>
        <end position="356"/>
    </location>
</feature>
<feature type="transmembrane region" description="Helical" evidence="1">
    <location>
        <begin position="2"/>
        <end position="22"/>
    </location>
</feature>
<feature type="transmembrane region" description="Helical" evidence="1">
    <location>
        <begin position="35"/>
        <end position="55"/>
    </location>
</feature>
<feature type="transmembrane region" description="Helical" evidence="1">
    <location>
        <begin position="76"/>
        <end position="96"/>
    </location>
</feature>
<feature type="transmembrane region" description="Helical" evidence="1">
    <location>
        <begin position="99"/>
        <end position="119"/>
    </location>
</feature>
<feature type="transmembrane region" description="Helical" evidence="1">
    <location>
        <begin position="124"/>
        <end position="144"/>
    </location>
</feature>
<feature type="transmembrane region" description="Helical" evidence="1">
    <location>
        <begin position="152"/>
        <end position="172"/>
    </location>
</feature>
<feature type="domain" description="GGDEF" evidence="2">
    <location>
        <begin position="218"/>
        <end position="353"/>
    </location>
</feature>
<protein>
    <recommendedName>
        <fullName>Uncharacterized membrane protein SH2145</fullName>
    </recommendedName>
</protein>
<accession>Q4L4H1</accession>
<organism>
    <name type="scientific">Staphylococcus haemolyticus (strain JCSC1435)</name>
    <dbReference type="NCBI Taxonomy" id="279808"/>
    <lineage>
        <taxon>Bacteria</taxon>
        <taxon>Bacillati</taxon>
        <taxon>Bacillota</taxon>
        <taxon>Bacilli</taxon>
        <taxon>Bacillales</taxon>
        <taxon>Staphylococcaceae</taxon>
        <taxon>Staphylococcus</taxon>
    </lineage>
</organism>
<sequence length="356" mass="40230">MIESIIYNVAVMVAGIYLFHRLQYSENKIMVFSKGYVTVLMTIVALLLAAYPIPFHQEYLVHLTFVPLLFLGRFTNMGYTLVSAVIVALVEVFAFGNSLLYGVVLIVIGIIVSMVGPFLKQNDIVALVILNLISVIILLILSIFSPLYDLTEIAFLVPISFVLTIASAITFVDMWHFFSLVTRYENEDKYDYLTGLGNVKEFDRHLNHVSQIAEDKNESLALLLIDIDGFKDVNDTYSHKSGDAVLKQMSQLLKNYVPKQFQIFRNGGEEFSVVIRNYSLDQSVKLAENIRTGVEKSSFHLPNKEVIKLSVSIGVGYLSQDDHKSQRKVFKDADDMVHVAKNEGRNQVMFNPIIKL</sequence>
<dbReference type="EMBL" id="AP006716">
    <property type="protein sequence ID" value="BAE05454.1"/>
    <property type="molecule type" value="Genomic_DNA"/>
</dbReference>
<dbReference type="SMR" id="Q4L4H1"/>
<dbReference type="KEGG" id="sha:SH2145"/>
<dbReference type="eggNOG" id="COG2199">
    <property type="taxonomic scope" value="Bacteria"/>
</dbReference>
<dbReference type="HOGENOM" id="CLU_000445_11_1_9"/>
<dbReference type="OrthoDB" id="9759607at2"/>
<dbReference type="Proteomes" id="UP000000543">
    <property type="component" value="Chromosome"/>
</dbReference>
<dbReference type="GO" id="GO:0005886">
    <property type="term" value="C:plasma membrane"/>
    <property type="evidence" value="ECO:0007669"/>
    <property type="project" value="UniProtKB-SubCell"/>
</dbReference>
<dbReference type="GO" id="GO:0052621">
    <property type="term" value="F:diguanylate cyclase activity"/>
    <property type="evidence" value="ECO:0007669"/>
    <property type="project" value="TreeGrafter"/>
</dbReference>
<dbReference type="GO" id="GO:0000155">
    <property type="term" value="F:phosphorelay sensor kinase activity"/>
    <property type="evidence" value="ECO:0007669"/>
    <property type="project" value="InterPro"/>
</dbReference>
<dbReference type="GO" id="GO:0043709">
    <property type="term" value="P:cell adhesion involved in single-species biofilm formation"/>
    <property type="evidence" value="ECO:0007669"/>
    <property type="project" value="TreeGrafter"/>
</dbReference>
<dbReference type="GO" id="GO:0071555">
    <property type="term" value="P:cell wall organization"/>
    <property type="evidence" value="ECO:0007669"/>
    <property type="project" value="InterPro"/>
</dbReference>
<dbReference type="GO" id="GO:1902201">
    <property type="term" value="P:negative regulation of bacterial-type flagellum-dependent cell motility"/>
    <property type="evidence" value="ECO:0007669"/>
    <property type="project" value="TreeGrafter"/>
</dbReference>
<dbReference type="CDD" id="cd01949">
    <property type="entry name" value="GGDEF"/>
    <property type="match status" value="1"/>
</dbReference>
<dbReference type="FunFam" id="3.30.70.270:FF:000001">
    <property type="entry name" value="Diguanylate cyclase domain protein"/>
    <property type="match status" value="1"/>
</dbReference>
<dbReference type="Gene3D" id="3.30.70.270">
    <property type="match status" value="1"/>
</dbReference>
<dbReference type="InterPro" id="IPR050469">
    <property type="entry name" value="Diguanylate_Cyclase"/>
</dbReference>
<dbReference type="InterPro" id="IPR000160">
    <property type="entry name" value="GGDEF_dom"/>
</dbReference>
<dbReference type="InterPro" id="IPR029787">
    <property type="entry name" value="Nucleotide_cyclase"/>
</dbReference>
<dbReference type="InterPro" id="IPR043128">
    <property type="entry name" value="Rev_trsase/Diguanyl_cyclase"/>
</dbReference>
<dbReference type="InterPro" id="IPR011620">
    <property type="entry name" value="Sig_transdc_His_kinase_LytS_TM"/>
</dbReference>
<dbReference type="NCBIfam" id="TIGR00254">
    <property type="entry name" value="GGDEF"/>
    <property type="match status" value="1"/>
</dbReference>
<dbReference type="PANTHER" id="PTHR45138:SF9">
    <property type="entry name" value="DIGUANYLATE CYCLASE DGCM-RELATED"/>
    <property type="match status" value="1"/>
</dbReference>
<dbReference type="PANTHER" id="PTHR45138">
    <property type="entry name" value="REGULATORY COMPONENTS OF SENSORY TRANSDUCTION SYSTEM"/>
    <property type="match status" value="1"/>
</dbReference>
<dbReference type="Pfam" id="PF07694">
    <property type="entry name" value="5TM-5TMR_LYT"/>
    <property type="match status" value="1"/>
</dbReference>
<dbReference type="Pfam" id="PF00990">
    <property type="entry name" value="GGDEF"/>
    <property type="match status" value="1"/>
</dbReference>
<dbReference type="SMART" id="SM00267">
    <property type="entry name" value="GGDEF"/>
    <property type="match status" value="1"/>
</dbReference>
<dbReference type="SUPFAM" id="SSF55073">
    <property type="entry name" value="Nucleotide cyclase"/>
    <property type="match status" value="1"/>
</dbReference>
<dbReference type="PROSITE" id="PS50887">
    <property type="entry name" value="GGDEF"/>
    <property type="match status" value="1"/>
</dbReference>
<evidence type="ECO:0000255" key="1"/>
<evidence type="ECO:0000255" key="2">
    <source>
        <dbReference type="PROSITE-ProRule" id="PRU00095"/>
    </source>
</evidence>
<evidence type="ECO:0000305" key="3"/>
<keyword id="KW-1003">Cell membrane</keyword>
<keyword id="KW-0472">Membrane</keyword>
<keyword id="KW-0812">Transmembrane</keyword>
<keyword id="KW-1133">Transmembrane helix</keyword>
<gene>
    <name type="ordered locus">SH2145</name>
</gene>
<name>Y2145_STAHJ</name>
<proteinExistence type="predicted"/>
<comment type="subcellular location">
    <subcellularLocation>
        <location evidence="3">Cell membrane</location>
        <topology evidence="3">Multi-pass membrane protein</topology>
    </subcellularLocation>
</comment>
<reference key="1">
    <citation type="journal article" date="2005" name="J. Bacteriol.">
        <title>Whole-genome sequencing of Staphylococcus haemolyticus uncovers the extreme plasticity of its genome and the evolution of human-colonizing staphylococcal species.</title>
        <authorList>
            <person name="Takeuchi F."/>
            <person name="Watanabe S."/>
            <person name="Baba T."/>
            <person name="Yuzawa H."/>
            <person name="Ito T."/>
            <person name="Morimoto Y."/>
            <person name="Kuroda M."/>
            <person name="Cui L."/>
            <person name="Takahashi M."/>
            <person name="Ankai A."/>
            <person name="Baba S."/>
            <person name="Fukui S."/>
            <person name="Lee J.C."/>
            <person name="Hiramatsu K."/>
        </authorList>
    </citation>
    <scope>NUCLEOTIDE SEQUENCE [LARGE SCALE GENOMIC DNA]</scope>
    <source>
        <strain>JCSC1435</strain>
    </source>
</reference>